<proteinExistence type="evidence at protein level"/>
<reference key="1">
    <citation type="journal article" date="2015" name="Genome Announc.">
        <title>Draft genome sequence of the fungus Penicillium brasilianum MG11.</title>
        <authorList>
            <person name="Horn F."/>
            <person name="Linde J."/>
            <person name="Mattern D.J."/>
            <person name="Walther G."/>
            <person name="Guthke R."/>
            <person name="Brakhage A.A."/>
            <person name="Valiante V."/>
        </authorList>
    </citation>
    <scope>NUCLEOTIDE SEQUENCE [LARGE SCALE GENOMIC DNA]</scope>
    <source>
        <strain>MG11</strain>
    </source>
</reference>
<reference key="2">
    <citation type="journal article" date="2024" name="J. Agric. Food Chem.">
        <title>Yeast synthesis and herbicidal activity evaluation of aspterric acid.</title>
        <authorList>
            <person name="Zhou Z."/>
            <person name="Zhang Y."/>
            <person name="Wu Q."/>
            <person name="Hou X."/>
            <person name="Zhang B."/>
        </authorList>
    </citation>
    <scope>FUNCTION</scope>
    <scope>PATHWAY</scope>
    <scope>BIOTECHNOLOGY</scope>
</reference>
<feature type="chain" id="PRO_0000462096" description="Terpene cyclase pbrA">
    <location>
        <begin position="1"/>
        <end position="405"/>
    </location>
</feature>
<feature type="short sequence motif" description="D(D/E)XX(D/E) motif" evidence="4">
    <location>
        <begin position="103"/>
        <end position="108"/>
    </location>
</feature>
<feature type="short sequence motif" description="NSE motif" evidence="4">
    <location>
        <begin position="227"/>
        <end position="237"/>
    </location>
</feature>
<feature type="short sequence motif" description="WxxxxxRY motif" evidence="2">
    <location>
        <begin position="316"/>
        <end position="323"/>
    </location>
</feature>
<feature type="binding site" evidence="1">
    <location>
        <position position="103"/>
    </location>
    <ligand>
        <name>Mg(2+)</name>
        <dbReference type="ChEBI" id="CHEBI:18420"/>
        <label>1</label>
    </ligand>
</feature>
<feature type="binding site" evidence="1">
    <location>
        <position position="168"/>
    </location>
    <ligand>
        <name>Mg(2+)</name>
        <dbReference type="ChEBI" id="CHEBI:18420"/>
        <label>1</label>
    </ligand>
</feature>
<feature type="binding site" evidence="1">
    <location>
        <position position="229"/>
    </location>
    <ligand>
        <name>Mg(2+)</name>
        <dbReference type="ChEBI" id="CHEBI:18420"/>
        <label>2</label>
    </ligand>
</feature>
<feature type="binding site" evidence="1">
    <location>
        <position position="233"/>
    </location>
    <ligand>
        <name>Mg(2+)</name>
        <dbReference type="ChEBI" id="CHEBI:18420"/>
        <label>2</label>
    </ligand>
</feature>
<feature type="binding site" evidence="1">
    <location>
        <position position="237"/>
    </location>
    <ligand>
        <name>Mg(2+)</name>
        <dbReference type="ChEBI" id="CHEBI:18420"/>
        <label>2</label>
    </ligand>
</feature>
<feature type="binding site" evidence="1">
    <location>
        <position position="241"/>
    </location>
    <ligand>
        <name>Mg(2+)</name>
        <dbReference type="ChEBI" id="CHEBI:18420"/>
        <label>3</label>
    </ligand>
</feature>
<dbReference type="EC" id="4.2.3.-" evidence="8"/>
<dbReference type="EMBL" id="CDHK01000010">
    <property type="protein sequence ID" value="CEJ61174.1"/>
    <property type="molecule type" value="Genomic_DNA"/>
</dbReference>
<dbReference type="STRING" id="104259.A0A0F7TWX5"/>
<dbReference type="OrthoDB" id="1946923at2759"/>
<dbReference type="UniPathway" id="UPA00213"/>
<dbReference type="Proteomes" id="UP000042958">
    <property type="component" value="Unassembled WGS sequence"/>
</dbReference>
<dbReference type="GO" id="GO:0045482">
    <property type="term" value="F:trichodiene synthase activity"/>
    <property type="evidence" value="ECO:0007669"/>
    <property type="project" value="UniProtKB-UniRule"/>
</dbReference>
<dbReference type="GO" id="GO:0016106">
    <property type="term" value="P:sesquiterpenoid biosynthetic process"/>
    <property type="evidence" value="ECO:0007669"/>
    <property type="project" value="UniProtKB-UniRule"/>
</dbReference>
<dbReference type="Gene3D" id="1.10.600.10">
    <property type="entry name" value="Farnesyl Diphosphate Synthase"/>
    <property type="match status" value="1"/>
</dbReference>
<dbReference type="InterPro" id="IPR008949">
    <property type="entry name" value="Isoprenoid_synthase_dom_sf"/>
</dbReference>
<dbReference type="InterPro" id="IPR010458">
    <property type="entry name" value="TRI5_ascomyc"/>
</dbReference>
<dbReference type="InterPro" id="IPR024652">
    <property type="entry name" value="Trichodiene_synth"/>
</dbReference>
<dbReference type="Pfam" id="PF06330">
    <property type="entry name" value="TRI5"/>
    <property type="match status" value="1"/>
</dbReference>
<dbReference type="PIRSF" id="PIRSF001388">
    <property type="entry name" value="TRI5"/>
    <property type="match status" value="1"/>
</dbReference>
<dbReference type="SFLD" id="SFLDS00005">
    <property type="entry name" value="Isoprenoid_Synthase_Type_I"/>
    <property type="match status" value="1"/>
</dbReference>
<dbReference type="SFLD" id="SFLDG01021">
    <property type="entry name" value="Trichodiene_Synthase_Like"/>
    <property type="match status" value="1"/>
</dbReference>
<dbReference type="SUPFAM" id="SSF48576">
    <property type="entry name" value="Terpenoid synthases"/>
    <property type="match status" value="1"/>
</dbReference>
<organism>
    <name type="scientific">Penicillium brasilianum</name>
    <dbReference type="NCBI Taxonomy" id="104259"/>
    <lineage>
        <taxon>Eukaryota</taxon>
        <taxon>Fungi</taxon>
        <taxon>Dikarya</taxon>
        <taxon>Ascomycota</taxon>
        <taxon>Pezizomycotina</taxon>
        <taxon>Eurotiomycetes</taxon>
        <taxon>Eurotiomycetidae</taxon>
        <taxon>Eurotiales</taxon>
        <taxon>Aspergillaceae</taxon>
        <taxon>Penicillium</taxon>
    </lineage>
</organism>
<evidence type="ECO:0000250" key="1">
    <source>
        <dbReference type="UniProtKB" id="P13513"/>
    </source>
</evidence>
<evidence type="ECO:0000250" key="2">
    <source>
        <dbReference type="UniProtKB" id="P9WEY7"/>
    </source>
</evidence>
<evidence type="ECO:0000250" key="3">
    <source>
        <dbReference type="UniProtKB" id="Q0CPG8"/>
    </source>
</evidence>
<evidence type="ECO:0000250" key="4">
    <source>
        <dbReference type="UniProtKB" id="Q9UR08"/>
    </source>
</evidence>
<evidence type="ECO:0000269" key="5">
    <source>
    </source>
</evidence>
<evidence type="ECO:0000303" key="6">
    <source>
    </source>
</evidence>
<evidence type="ECO:0000305" key="7"/>
<evidence type="ECO:0000305" key="8">
    <source>
    </source>
</evidence>
<name>PBRA_PENBI</name>
<protein>
    <recommendedName>
        <fullName evidence="6">Terpene cyclase pbrA</fullName>
        <ecNumber evidence="8">4.2.3.-</ecNumber>
    </recommendedName>
    <alternativeName>
        <fullName evidence="6">Aspterric acid biosynthesis cluster protein A</fullName>
    </alternativeName>
</protein>
<keyword id="KW-0456">Lyase</keyword>
<keyword id="KW-0460">Magnesium</keyword>
<keyword id="KW-0479">Metal-binding</keyword>
<keyword id="KW-1185">Reference proteome</keyword>
<keyword id="KW-0843">Virulence</keyword>
<comment type="function">
    <text evidence="3 5">Terpene cyclase; part of the gene cluster that mediates the biosynthesis of the sesquiterpenoid aspterric acid (AA), an inhibitor of dihydroxy-acid dehydratase (DHAD) effective as an herbicide (PubMed:39511739). PbrA cyclizes farnesyl diphosphate (FPP) to produce (-)-daucane (By similarity). The cytochrome P450 monooxygenase pbrBB then converts (-)-daucane into the alpha-epoxy carboxylate intermediate which is further converted into the tricyclic aspterric acid by the cytochrome P450 monooxygenase pbrC (By similarity).</text>
</comment>
<comment type="cofactor">
    <cofactor evidence="1">
        <name>Mg(2+)</name>
        <dbReference type="ChEBI" id="CHEBI:18420"/>
    </cofactor>
</comment>
<comment type="pathway">
    <text evidence="5">Secondary metabolite biosynthesis; terpenoid biosynthesis.</text>
</comment>
<comment type="domain">
    <text evidence="4">The conserved active-site motif D(D/E)XX(D/E) is required for coordinating the divalent metal ions that stabilize the PPI moiety of the substrate.</text>
</comment>
<comment type="biotechnology">
    <text evidence="5">The fungal sesquiterpenoid aspterric acid (AA) is a submicromolar inhibitor of dihydroxy-acid dehydratase (DHAD) in plants and is effective as an herbicide in spray applications.</text>
</comment>
<comment type="similarity">
    <text evidence="7">Belongs to the trichodiene synthase family.</text>
</comment>
<gene>
    <name evidence="6" type="primary">pbrA</name>
    <name type="ORF">PMG11_09714</name>
</gene>
<accession>A0A0F7TWX5</accession>
<sequence>MDMNTFPANTYCDSIVRFLDAIEYHDDNLTHDERVEGLRHVHSRTAQYFTEPLPRKVLKDVAPRRIAAVTRTISHFIVYCWSKLPREAQVDVSIYLSIINVLDDEISSEPSTQMATFWTDLVQGKQQKHPFWVLFNSHLPRLLRHYDSFCSFNIMRCTFDYFEGCWIEQHNFQGYPGADCYPLFLRRLNCLGGAVAGTIFPAAKFDEQKLFAEISCVMAQIDGPVALVNDLFSFYKEYDQDEANLVTNWCTVDGITMDQALTRLTDDTIHACVRILEILKDKDPDMLATIRGFIHGYVTWHICDFRYRLREIYDREDLGGSSAKFRDYFDTAINVGWVDVEEWTCQVQGFEVDGPVPKGSEIQAYRTNAFGFSVDTRRPHNMDYVGSSIISMFEWVTGYLKGKSR</sequence>